<evidence type="ECO:0000250" key="1">
    <source>
        <dbReference type="UniProtKB" id="P50389"/>
    </source>
</evidence>
<evidence type="ECO:0000255" key="2">
    <source>
        <dbReference type="HAMAP-Rule" id="MF_01627"/>
    </source>
</evidence>
<gene>
    <name evidence="2" type="primary">deoD</name>
    <name type="ordered locus">ECIAI39_4916</name>
</gene>
<feature type="chain" id="PRO_1000186188" description="Purine nucleoside phosphorylase DeoD-type">
    <location>
        <begin position="1"/>
        <end position="239"/>
    </location>
</feature>
<feature type="active site" description="Proton donor" evidence="2">
    <location>
        <position position="205"/>
    </location>
</feature>
<feature type="binding site" evidence="1">
    <location>
        <position position="5"/>
    </location>
    <ligand>
        <name>a purine D-ribonucleoside</name>
        <dbReference type="ChEBI" id="CHEBI:142355"/>
        <note>ligand shared between dimeric partners</note>
    </ligand>
</feature>
<feature type="binding site" description="in other chain" evidence="1">
    <location>
        <position position="21"/>
    </location>
    <ligand>
        <name>phosphate</name>
        <dbReference type="ChEBI" id="CHEBI:43474"/>
        <note>ligand shared between dimeric partners</note>
    </ligand>
</feature>
<feature type="binding site" description="in other chain" evidence="1">
    <location>
        <position position="25"/>
    </location>
    <ligand>
        <name>phosphate</name>
        <dbReference type="ChEBI" id="CHEBI:43474"/>
        <note>ligand shared between dimeric partners</note>
    </ligand>
</feature>
<feature type="binding site" evidence="1">
    <location>
        <position position="44"/>
    </location>
    <ligand>
        <name>phosphate</name>
        <dbReference type="ChEBI" id="CHEBI:43474"/>
        <note>ligand shared between dimeric partners</note>
    </ligand>
</feature>
<feature type="binding site" description="in other chain" evidence="1">
    <location>
        <begin position="88"/>
        <end position="91"/>
    </location>
    <ligand>
        <name>phosphate</name>
        <dbReference type="ChEBI" id="CHEBI:43474"/>
        <note>ligand shared between dimeric partners</note>
    </ligand>
</feature>
<feature type="binding site" description="in other chain" evidence="1">
    <location>
        <begin position="180"/>
        <end position="182"/>
    </location>
    <ligand>
        <name>a purine D-ribonucleoside</name>
        <dbReference type="ChEBI" id="CHEBI:142355"/>
        <note>ligand shared between dimeric partners</note>
    </ligand>
</feature>
<feature type="binding site" description="in other chain" evidence="1">
    <location>
        <begin position="204"/>
        <end position="205"/>
    </location>
    <ligand>
        <name>a purine D-ribonucleoside</name>
        <dbReference type="ChEBI" id="CHEBI:142355"/>
        <note>ligand shared between dimeric partners</note>
    </ligand>
</feature>
<feature type="site" description="Important for catalytic activity" evidence="2">
    <location>
        <position position="218"/>
    </location>
</feature>
<feature type="modified residue" description="N6-acetyllysine" evidence="2">
    <location>
        <position position="27"/>
    </location>
</feature>
<dbReference type="EC" id="2.4.2.1" evidence="2"/>
<dbReference type="EMBL" id="CU928164">
    <property type="protein sequence ID" value="CAR21012.1"/>
    <property type="molecule type" value="Genomic_DNA"/>
</dbReference>
<dbReference type="RefSeq" id="WP_000224879.1">
    <property type="nucleotide sequence ID" value="NC_011750.1"/>
</dbReference>
<dbReference type="RefSeq" id="YP_002410761.1">
    <property type="nucleotide sequence ID" value="NC_011750.1"/>
</dbReference>
<dbReference type="SMR" id="B7NW64"/>
<dbReference type="STRING" id="585057.ECIAI39_4916"/>
<dbReference type="KEGG" id="ect:ECIAI39_4916"/>
<dbReference type="PATRIC" id="fig|585057.6.peg.5078"/>
<dbReference type="HOGENOM" id="CLU_068457_2_0_6"/>
<dbReference type="Proteomes" id="UP000000749">
    <property type="component" value="Chromosome"/>
</dbReference>
<dbReference type="GO" id="GO:0005829">
    <property type="term" value="C:cytosol"/>
    <property type="evidence" value="ECO:0007669"/>
    <property type="project" value="TreeGrafter"/>
</dbReference>
<dbReference type="GO" id="GO:0004731">
    <property type="term" value="F:purine-nucleoside phosphorylase activity"/>
    <property type="evidence" value="ECO:0007669"/>
    <property type="project" value="UniProtKB-UniRule"/>
</dbReference>
<dbReference type="GO" id="GO:0006152">
    <property type="term" value="P:purine nucleoside catabolic process"/>
    <property type="evidence" value="ECO:0007669"/>
    <property type="project" value="TreeGrafter"/>
</dbReference>
<dbReference type="CDD" id="cd09006">
    <property type="entry name" value="PNP_EcPNPI-like"/>
    <property type="match status" value="1"/>
</dbReference>
<dbReference type="FunFam" id="3.40.50.1580:FF:000002">
    <property type="entry name" value="Purine nucleoside phosphorylase DeoD-type"/>
    <property type="match status" value="1"/>
</dbReference>
<dbReference type="Gene3D" id="3.40.50.1580">
    <property type="entry name" value="Nucleoside phosphorylase domain"/>
    <property type="match status" value="1"/>
</dbReference>
<dbReference type="HAMAP" id="MF_01627">
    <property type="entry name" value="Pur_nucleosid_phosp"/>
    <property type="match status" value="1"/>
</dbReference>
<dbReference type="InterPro" id="IPR004402">
    <property type="entry name" value="DeoD-type"/>
</dbReference>
<dbReference type="InterPro" id="IPR018016">
    <property type="entry name" value="Nucleoside_phosphorylase_CS"/>
</dbReference>
<dbReference type="InterPro" id="IPR000845">
    <property type="entry name" value="Nucleoside_phosphorylase_d"/>
</dbReference>
<dbReference type="InterPro" id="IPR035994">
    <property type="entry name" value="Nucleoside_phosphorylase_sf"/>
</dbReference>
<dbReference type="NCBIfam" id="TIGR00107">
    <property type="entry name" value="deoD"/>
    <property type="match status" value="1"/>
</dbReference>
<dbReference type="NCBIfam" id="NF004489">
    <property type="entry name" value="PRK05819.1"/>
    <property type="match status" value="1"/>
</dbReference>
<dbReference type="NCBIfam" id="NF009914">
    <property type="entry name" value="PRK13374.1"/>
    <property type="match status" value="1"/>
</dbReference>
<dbReference type="PANTHER" id="PTHR43691:SF2">
    <property type="entry name" value="PURINE NUCLEOSIDE PHOSPHORYLASE DEOD-TYPE"/>
    <property type="match status" value="1"/>
</dbReference>
<dbReference type="PANTHER" id="PTHR43691">
    <property type="entry name" value="URIDINE PHOSPHORYLASE"/>
    <property type="match status" value="1"/>
</dbReference>
<dbReference type="Pfam" id="PF01048">
    <property type="entry name" value="PNP_UDP_1"/>
    <property type="match status" value="1"/>
</dbReference>
<dbReference type="SUPFAM" id="SSF53167">
    <property type="entry name" value="Purine and uridine phosphorylases"/>
    <property type="match status" value="1"/>
</dbReference>
<dbReference type="PROSITE" id="PS01232">
    <property type="entry name" value="PNP_UDP_1"/>
    <property type="match status" value="1"/>
</dbReference>
<proteinExistence type="inferred from homology"/>
<protein>
    <recommendedName>
        <fullName evidence="2">Purine nucleoside phosphorylase DeoD-type</fullName>
        <shortName evidence="2">PNP</shortName>
        <ecNumber evidence="2">2.4.2.1</ecNumber>
    </recommendedName>
</protein>
<sequence>MATPHINAEMGDFADVVLMPGDPLRAKYIAETFLEDAREVNNVRGMLGFTGTYKGRKISVMGHGMGIPSCSIYTKELITDFGVKKIIRVGSCGAVLPHVKLRDVVIGMGACTDSKVNRIRFKDHDFAAIADFDMVRNAVDAAKALGVDARVGNLFSADLFYSPDGEMFDVMEKYGILGVEMEAAGIYGVAAEFGAKALTICTVSDHIRTHEQTTAAERQTTFNDMIKIALESVLLGDKE</sequence>
<reference key="1">
    <citation type="journal article" date="2009" name="PLoS Genet.">
        <title>Organised genome dynamics in the Escherichia coli species results in highly diverse adaptive paths.</title>
        <authorList>
            <person name="Touchon M."/>
            <person name="Hoede C."/>
            <person name="Tenaillon O."/>
            <person name="Barbe V."/>
            <person name="Baeriswyl S."/>
            <person name="Bidet P."/>
            <person name="Bingen E."/>
            <person name="Bonacorsi S."/>
            <person name="Bouchier C."/>
            <person name="Bouvet O."/>
            <person name="Calteau A."/>
            <person name="Chiapello H."/>
            <person name="Clermont O."/>
            <person name="Cruveiller S."/>
            <person name="Danchin A."/>
            <person name="Diard M."/>
            <person name="Dossat C."/>
            <person name="Karoui M.E."/>
            <person name="Frapy E."/>
            <person name="Garry L."/>
            <person name="Ghigo J.M."/>
            <person name="Gilles A.M."/>
            <person name="Johnson J."/>
            <person name="Le Bouguenec C."/>
            <person name="Lescat M."/>
            <person name="Mangenot S."/>
            <person name="Martinez-Jehanne V."/>
            <person name="Matic I."/>
            <person name="Nassif X."/>
            <person name="Oztas S."/>
            <person name="Petit M.A."/>
            <person name="Pichon C."/>
            <person name="Rouy Z."/>
            <person name="Ruf C.S."/>
            <person name="Schneider D."/>
            <person name="Tourret J."/>
            <person name="Vacherie B."/>
            <person name="Vallenet D."/>
            <person name="Medigue C."/>
            <person name="Rocha E.P.C."/>
            <person name="Denamur E."/>
        </authorList>
    </citation>
    <scope>NUCLEOTIDE SEQUENCE [LARGE SCALE GENOMIC DNA]</scope>
    <source>
        <strain>IAI39 / ExPEC</strain>
    </source>
</reference>
<organism>
    <name type="scientific">Escherichia coli O7:K1 (strain IAI39 / ExPEC)</name>
    <dbReference type="NCBI Taxonomy" id="585057"/>
    <lineage>
        <taxon>Bacteria</taxon>
        <taxon>Pseudomonadati</taxon>
        <taxon>Pseudomonadota</taxon>
        <taxon>Gammaproteobacteria</taxon>
        <taxon>Enterobacterales</taxon>
        <taxon>Enterobacteriaceae</taxon>
        <taxon>Escherichia</taxon>
    </lineage>
</organism>
<accession>B7NW64</accession>
<comment type="function">
    <text evidence="2">Catalyzes the reversible phosphorolytic breakdown of the N-glycosidic bond in the beta-(deoxy)ribonucleoside molecules, with the formation of the corresponding free purine bases and pentose-1-phosphate.</text>
</comment>
<comment type="catalytic activity">
    <reaction evidence="2">
        <text>a purine D-ribonucleoside + phosphate = a purine nucleobase + alpha-D-ribose 1-phosphate</text>
        <dbReference type="Rhea" id="RHEA:19805"/>
        <dbReference type="ChEBI" id="CHEBI:26386"/>
        <dbReference type="ChEBI" id="CHEBI:43474"/>
        <dbReference type="ChEBI" id="CHEBI:57720"/>
        <dbReference type="ChEBI" id="CHEBI:142355"/>
        <dbReference type="EC" id="2.4.2.1"/>
    </reaction>
</comment>
<comment type="catalytic activity">
    <reaction evidence="2">
        <text>a purine 2'-deoxy-D-ribonucleoside + phosphate = a purine nucleobase + 2-deoxy-alpha-D-ribose 1-phosphate</text>
        <dbReference type="Rhea" id="RHEA:36431"/>
        <dbReference type="ChEBI" id="CHEBI:26386"/>
        <dbReference type="ChEBI" id="CHEBI:43474"/>
        <dbReference type="ChEBI" id="CHEBI:57259"/>
        <dbReference type="ChEBI" id="CHEBI:142361"/>
        <dbReference type="EC" id="2.4.2.1"/>
    </reaction>
</comment>
<comment type="subunit">
    <text evidence="2">Homohexamer; trimer of homodimers.</text>
</comment>
<comment type="similarity">
    <text evidence="2">Belongs to the PNP/UDP phosphorylase family.</text>
</comment>
<name>DEOD_ECO7I</name>
<keyword id="KW-0007">Acetylation</keyword>
<keyword id="KW-0328">Glycosyltransferase</keyword>
<keyword id="KW-0808">Transferase</keyword>